<proteinExistence type="inferred from homology"/>
<accession>P0DG19</accession>
<accession>P58090</accession>
<accession>P67505</accession>
<keyword id="KW-0489">Methyltransferase</keyword>
<keyword id="KW-0949">S-adenosyl-L-methionine</keyword>
<keyword id="KW-0808">Transferase</keyword>
<keyword id="KW-0819">tRNA processing</keyword>
<feature type="chain" id="PRO_0000411599" description="tRNA (guanine-N(7)-)-methyltransferase">
    <location>
        <begin position="1"/>
        <end position="211"/>
    </location>
</feature>
<feature type="region of interest" description="Interaction with RNA" evidence="2">
    <location>
        <begin position="124"/>
        <end position="129"/>
    </location>
</feature>
<feature type="active site" evidence="1">
    <location>
        <position position="118"/>
    </location>
</feature>
<feature type="binding site" evidence="2">
    <location>
        <position position="44"/>
    </location>
    <ligand>
        <name>S-adenosyl-L-methionine</name>
        <dbReference type="ChEBI" id="CHEBI:59789"/>
    </ligand>
</feature>
<feature type="binding site" evidence="2">
    <location>
        <position position="69"/>
    </location>
    <ligand>
        <name>S-adenosyl-L-methionine</name>
        <dbReference type="ChEBI" id="CHEBI:59789"/>
    </ligand>
</feature>
<feature type="binding site" evidence="2">
    <location>
        <position position="96"/>
    </location>
    <ligand>
        <name>S-adenosyl-L-methionine</name>
        <dbReference type="ChEBI" id="CHEBI:59789"/>
    </ligand>
</feature>
<feature type="binding site" evidence="2">
    <location>
        <position position="118"/>
    </location>
    <ligand>
        <name>S-adenosyl-L-methionine</name>
        <dbReference type="ChEBI" id="CHEBI:59789"/>
    </ligand>
</feature>
<feature type="binding site" evidence="2">
    <location>
        <position position="122"/>
    </location>
    <ligand>
        <name>substrate</name>
    </ligand>
</feature>
<feature type="binding site" evidence="2">
    <location>
        <position position="154"/>
    </location>
    <ligand>
        <name>substrate</name>
    </ligand>
</feature>
<feature type="binding site" evidence="2">
    <location>
        <begin position="191"/>
        <end position="194"/>
    </location>
    <ligand>
        <name>substrate</name>
    </ligand>
</feature>
<reference key="1">
    <citation type="journal article" date="2003" name="Genome Res.">
        <title>Genome sequence of an M3 strain of Streptococcus pyogenes reveals a large-scale genomic rearrangement in invasive strains and new insights into phage evolution.</title>
        <authorList>
            <person name="Nakagawa I."/>
            <person name="Kurokawa K."/>
            <person name="Yamashita A."/>
            <person name="Nakata M."/>
            <person name="Tomiyasu Y."/>
            <person name="Okahashi N."/>
            <person name="Kawabata S."/>
            <person name="Yamazaki K."/>
            <person name="Shiba T."/>
            <person name="Yasunaga T."/>
            <person name="Hayashi H."/>
            <person name="Hattori M."/>
            <person name="Hamada S."/>
        </authorList>
    </citation>
    <scope>NUCLEOTIDE SEQUENCE [LARGE SCALE GENOMIC DNA]</scope>
    <source>
        <strain>SSI-1</strain>
    </source>
</reference>
<protein>
    <recommendedName>
        <fullName evidence="2">tRNA (guanine-N(7)-)-methyltransferase</fullName>
        <ecNumber evidence="2">2.1.1.33</ecNumber>
    </recommendedName>
    <alternativeName>
        <fullName evidence="2">tRNA (guanine(46)-N(7))-methyltransferase</fullName>
    </alternativeName>
    <alternativeName>
        <fullName evidence="2">tRNA(m7G46)-methyltransferase</fullName>
    </alternativeName>
</protein>
<dbReference type="EC" id="2.1.1.33" evidence="2"/>
<dbReference type="EMBL" id="BA000034">
    <property type="protein sequence ID" value="BAC63462.1"/>
    <property type="molecule type" value="Genomic_DNA"/>
</dbReference>
<dbReference type="RefSeq" id="WP_002983387.1">
    <property type="nucleotide sequence ID" value="NC_004606.1"/>
</dbReference>
<dbReference type="SMR" id="P0DG19"/>
<dbReference type="GeneID" id="69900424"/>
<dbReference type="KEGG" id="sps:SPs0367"/>
<dbReference type="HOGENOM" id="CLU_050910_2_1_9"/>
<dbReference type="UniPathway" id="UPA00989"/>
<dbReference type="GO" id="GO:0043527">
    <property type="term" value="C:tRNA methyltransferase complex"/>
    <property type="evidence" value="ECO:0007669"/>
    <property type="project" value="TreeGrafter"/>
</dbReference>
<dbReference type="GO" id="GO:0008176">
    <property type="term" value="F:tRNA (guanine(46)-N7)-methyltransferase activity"/>
    <property type="evidence" value="ECO:0007669"/>
    <property type="project" value="UniProtKB-UniRule"/>
</dbReference>
<dbReference type="CDD" id="cd02440">
    <property type="entry name" value="AdoMet_MTases"/>
    <property type="match status" value="1"/>
</dbReference>
<dbReference type="FunFam" id="3.40.50.150:FF:000035">
    <property type="entry name" value="tRNA (guanine-N(7)-)-methyltransferase"/>
    <property type="match status" value="1"/>
</dbReference>
<dbReference type="Gene3D" id="3.40.50.150">
    <property type="entry name" value="Vaccinia Virus protein VP39"/>
    <property type="match status" value="1"/>
</dbReference>
<dbReference type="HAMAP" id="MF_01057">
    <property type="entry name" value="tRNA_methyltr_TrmB"/>
    <property type="match status" value="1"/>
</dbReference>
<dbReference type="InterPro" id="IPR029063">
    <property type="entry name" value="SAM-dependent_MTases_sf"/>
</dbReference>
<dbReference type="InterPro" id="IPR003358">
    <property type="entry name" value="tRNA_(Gua-N-7)_MeTrfase_Trmb"/>
</dbReference>
<dbReference type="InterPro" id="IPR055361">
    <property type="entry name" value="tRNA_methyltr_TrmB_bact"/>
</dbReference>
<dbReference type="NCBIfam" id="NF001080">
    <property type="entry name" value="PRK00121.2-2"/>
    <property type="match status" value="1"/>
</dbReference>
<dbReference type="NCBIfam" id="TIGR00091">
    <property type="entry name" value="tRNA (guanosine(46)-N7)-methyltransferase TrmB"/>
    <property type="match status" value="1"/>
</dbReference>
<dbReference type="PANTHER" id="PTHR23417">
    <property type="entry name" value="3-DEOXY-D-MANNO-OCTULOSONIC-ACID TRANSFERASE/TRNA GUANINE-N 7 - -METHYLTRANSFERASE"/>
    <property type="match status" value="1"/>
</dbReference>
<dbReference type="PANTHER" id="PTHR23417:SF14">
    <property type="entry name" value="PENTACOTRIPEPTIDE-REPEAT REGION OF PRORP DOMAIN-CONTAINING PROTEIN"/>
    <property type="match status" value="1"/>
</dbReference>
<dbReference type="Pfam" id="PF02390">
    <property type="entry name" value="Methyltransf_4"/>
    <property type="match status" value="1"/>
</dbReference>
<dbReference type="SUPFAM" id="SSF53335">
    <property type="entry name" value="S-adenosyl-L-methionine-dependent methyltransferases"/>
    <property type="match status" value="1"/>
</dbReference>
<dbReference type="PROSITE" id="PS51625">
    <property type="entry name" value="SAM_MT_TRMB"/>
    <property type="match status" value="1"/>
</dbReference>
<organism>
    <name type="scientific">Streptococcus pyogenes serotype M3 (strain SSI-1)</name>
    <dbReference type="NCBI Taxonomy" id="193567"/>
    <lineage>
        <taxon>Bacteria</taxon>
        <taxon>Bacillati</taxon>
        <taxon>Bacillota</taxon>
        <taxon>Bacilli</taxon>
        <taxon>Lactobacillales</taxon>
        <taxon>Streptococcaceae</taxon>
        <taxon>Streptococcus</taxon>
    </lineage>
</organism>
<evidence type="ECO:0000250" key="1"/>
<evidence type="ECO:0000255" key="2">
    <source>
        <dbReference type="HAMAP-Rule" id="MF_01057"/>
    </source>
</evidence>
<sequence length="211" mass="24455">MRVRKRKGAEEHLANNPHYVILNPEDAKGRWHDVFGNDRPIHIEVGSGKGGFITGMALKNPDINYIGIDIQLSVLSYALDKVLASEVPNVKLLRVDGSSLTNYFEDGEVDMMYLNFSDPWPKTKHEKRRLTYKDFLDTYKRILPEHGEIHFKTDNRGLFEYSLASFSQYGMTLRQIWLDLHASNYEGNVMTEYEEKFSNKGQVIYRVEANF</sequence>
<gene>
    <name evidence="2" type="primary">trmB</name>
    <name type="ordered locus">SPs0367</name>
</gene>
<comment type="function">
    <text evidence="2">Catalyzes the formation of N(7)-methylguanine at position 46 (m7G46) in tRNA.</text>
</comment>
<comment type="catalytic activity">
    <reaction evidence="2">
        <text>guanosine(46) in tRNA + S-adenosyl-L-methionine = N(7)-methylguanosine(46) in tRNA + S-adenosyl-L-homocysteine</text>
        <dbReference type="Rhea" id="RHEA:42708"/>
        <dbReference type="Rhea" id="RHEA-COMP:10188"/>
        <dbReference type="Rhea" id="RHEA-COMP:10189"/>
        <dbReference type="ChEBI" id="CHEBI:57856"/>
        <dbReference type="ChEBI" id="CHEBI:59789"/>
        <dbReference type="ChEBI" id="CHEBI:74269"/>
        <dbReference type="ChEBI" id="CHEBI:74480"/>
        <dbReference type="EC" id="2.1.1.33"/>
    </reaction>
</comment>
<comment type="pathway">
    <text evidence="2">tRNA modification; N(7)-methylguanine-tRNA biosynthesis.</text>
</comment>
<comment type="similarity">
    <text evidence="2">Belongs to the class I-like SAM-binding methyltransferase superfamily. TrmB family.</text>
</comment>
<name>TRMB_STRPQ</name>